<sequence length="364" mass="40285">MKGLILVGGFGTRLRPLTLTLPKPLVEFCNKPMIVHQIEALVAAGVTDIVLAVNYRPEIMEKFLAEYEEKYNINIEFSVESEPLDTAGPLKLAERILGKDDSPFFVLNSDVICDYPFKELLEFHKAHGDEGTIVVTKVEEPSKYGVVVHKPNHPSRIDRFVEKPVEFVGNRINAGMYIFNPSVLKRIELRPTSIEKETFPAMVADNQLHSFDLEGFWMDVGQPKDFLSGTCLYLSSLTKKGSKELTPPTEPYVHGGNVMIHPSAKIGKNCRIGPNVTIGPDVVVGDGVRLQRCVLLKGSKVKDHAWVKSTIVGWNSTVGRWARLENVTVLGDDVTIGDEIYVNGGSVLPHKSIKANVDVPAIIM</sequence>
<proteinExistence type="evidence at protein level"/>
<name>MPG1_HYPJE</name>
<organism>
    <name type="scientific">Hypocrea jecorina</name>
    <name type="common">Trichoderma reesei</name>
    <dbReference type="NCBI Taxonomy" id="51453"/>
    <lineage>
        <taxon>Eukaryota</taxon>
        <taxon>Fungi</taxon>
        <taxon>Dikarya</taxon>
        <taxon>Ascomycota</taxon>
        <taxon>Pezizomycotina</taxon>
        <taxon>Sordariomycetes</taxon>
        <taxon>Hypocreomycetidae</taxon>
        <taxon>Hypocreales</taxon>
        <taxon>Hypocreaceae</taxon>
        <taxon>Trichoderma</taxon>
    </lineage>
</organism>
<protein>
    <recommendedName>
        <fullName>Mannose-1-phosphate guanyltransferase</fullName>
        <ecNumber>2.7.7.13</ecNumber>
    </recommendedName>
    <alternativeName>
        <fullName>GDP-mannose pyrophosphorylase</fullName>
    </alternativeName>
    <alternativeName>
        <fullName>GTP-mannose-1-phosphate guanylyltransferase</fullName>
    </alternativeName>
</protein>
<keyword id="KW-0131">Cell cycle</keyword>
<keyword id="KW-0963">Cytoplasm</keyword>
<keyword id="KW-0342">GTP-binding</keyword>
<keyword id="KW-0547">Nucleotide-binding</keyword>
<keyword id="KW-0548">Nucleotidyltransferase</keyword>
<keyword id="KW-0808">Transferase</keyword>
<feature type="chain" id="PRO_0000238493" description="Mannose-1-phosphate guanyltransferase">
    <location>
        <begin position="1"/>
        <end position="364"/>
    </location>
</feature>
<comment type="function">
    <text evidence="1">Involved in cell wall synthesis where it is required for glycosylation. Involved in cell cycle progression through cell-size checkpoint (By similarity).</text>
</comment>
<comment type="catalytic activity">
    <reaction evidence="2">
        <text>alpha-D-mannose 1-phosphate + GTP + H(+) = GDP-alpha-D-mannose + diphosphate</text>
        <dbReference type="Rhea" id="RHEA:15229"/>
        <dbReference type="ChEBI" id="CHEBI:15378"/>
        <dbReference type="ChEBI" id="CHEBI:33019"/>
        <dbReference type="ChEBI" id="CHEBI:37565"/>
        <dbReference type="ChEBI" id="CHEBI:57527"/>
        <dbReference type="ChEBI" id="CHEBI:58409"/>
        <dbReference type="EC" id="2.7.7.13"/>
    </reaction>
</comment>
<comment type="pathway">
    <text>Nucleotide-sugar biosynthesis; GDP-alpha-D-mannose biosynthesis; GDP-alpha-D-mannose from alpha-D-mannose 1-phosphate (GTP route): step 1/1.</text>
</comment>
<comment type="subcellular location">
    <subcellularLocation>
        <location evidence="1">Cytoplasm</location>
    </subcellularLocation>
</comment>
<comment type="similarity">
    <text evidence="3">Belongs to the transferase hexapeptide repeat family.</text>
</comment>
<dbReference type="EC" id="2.7.7.13"/>
<dbReference type="EMBL" id="U89991">
    <property type="protein sequence ID" value="AAC39498.1"/>
    <property type="molecule type" value="mRNA"/>
</dbReference>
<dbReference type="SMR" id="O74624"/>
<dbReference type="VEuPathDB" id="FungiDB:TrQ_006497"/>
<dbReference type="OMA" id="GPNCWIC"/>
<dbReference type="BRENDA" id="2.7.7.13">
    <property type="organism ID" value="6451"/>
</dbReference>
<dbReference type="UniPathway" id="UPA00126">
    <property type="reaction ID" value="UER00930"/>
</dbReference>
<dbReference type="GO" id="GO:0005737">
    <property type="term" value="C:cytoplasm"/>
    <property type="evidence" value="ECO:0007669"/>
    <property type="project" value="UniProtKB-SubCell"/>
</dbReference>
<dbReference type="GO" id="GO:0005525">
    <property type="term" value="F:GTP binding"/>
    <property type="evidence" value="ECO:0007669"/>
    <property type="project" value="UniProtKB-KW"/>
</dbReference>
<dbReference type="GO" id="GO:0004475">
    <property type="term" value="F:mannose-1-phosphate guanylyltransferase (GTP) activity"/>
    <property type="evidence" value="ECO:0007669"/>
    <property type="project" value="UniProtKB-EC"/>
</dbReference>
<dbReference type="GO" id="GO:0000032">
    <property type="term" value="P:cell wall mannoprotein biosynthetic process"/>
    <property type="evidence" value="ECO:0007669"/>
    <property type="project" value="EnsemblFungi"/>
</dbReference>
<dbReference type="GO" id="GO:0009298">
    <property type="term" value="P:GDP-mannose biosynthetic process"/>
    <property type="evidence" value="ECO:0007669"/>
    <property type="project" value="UniProtKB-UniPathway"/>
</dbReference>
<dbReference type="GO" id="GO:0006486">
    <property type="term" value="P:protein glycosylation"/>
    <property type="evidence" value="ECO:0007669"/>
    <property type="project" value="EnsemblFungi"/>
</dbReference>
<dbReference type="CDD" id="cd05824">
    <property type="entry name" value="LbH_M1P_guanylylT_C"/>
    <property type="match status" value="1"/>
</dbReference>
<dbReference type="CDD" id="cd06425">
    <property type="entry name" value="M1P_guanylylT_B_like_N"/>
    <property type="match status" value="1"/>
</dbReference>
<dbReference type="FunFam" id="2.160.10.10:FF:000017">
    <property type="entry name" value="Mannose-1-phosphate guanyltransferase"/>
    <property type="match status" value="1"/>
</dbReference>
<dbReference type="FunFam" id="3.90.550.10:FF:000013">
    <property type="entry name" value="mannose-1-phosphate guanyltransferase beta"/>
    <property type="match status" value="1"/>
</dbReference>
<dbReference type="Gene3D" id="2.160.10.10">
    <property type="entry name" value="Hexapeptide repeat proteins"/>
    <property type="match status" value="1"/>
</dbReference>
<dbReference type="Gene3D" id="3.90.550.10">
    <property type="entry name" value="Spore Coat Polysaccharide Biosynthesis Protein SpsA, Chain A"/>
    <property type="match status" value="1"/>
</dbReference>
<dbReference type="InterPro" id="IPR056729">
    <property type="entry name" value="GMPPB_C"/>
</dbReference>
<dbReference type="InterPro" id="IPR045233">
    <property type="entry name" value="GMPPB_N"/>
</dbReference>
<dbReference type="InterPro" id="IPR050486">
    <property type="entry name" value="Mannose-1P_guanyltransferase"/>
</dbReference>
<dbReference type="InterPro" id="IPR005835">
    <property type="entry name" value="NTP_transferase_dom"/>
</dbReference>
<dbReference type="InterPro" id="IPR029044">
    <property type="entry name" value="Nucleotide-diphossugar_trans"/>
</dbReference>
<dbReference type="PANTHER" id="PTHR22572">
    <property type="entry name" value="SUGAR-1-PHOSPHATE GUANYL TRANSFERASE"/>
    <property type="match status" value="1"/>
</dbReference>
<dbReference type="Pfam" id="PF25087">
    <property type="entry name" value="GMPPB_C"/>
    <property type="match status" value="1"/>
</dbReference>
<dbReference type="Pfam" id="PF00483">
    <property type="entry name" value="NTP_transferase"/>
    <property type="match status" value="1"/>
</dbReference>
<dbReference type="SUPFAM" id="SSF53448">
    <property type="entry name" value="Nucleotide-diphospho-sugar transferases"/>
    <property type="match status" value="1"/>
</dbReference>
<dbReference type="PROSITE" id="PS00101">
    <property type="entry name" value="HEXAPEP_TRANSFERASES"/>
    <property type="match status" value="1"/>
</dbReference>
<gene>
    <name type="primary">mpg1</name>
</gene>
<accession>O74624</accession>
<evidence type="ECO:0000250" key="1"/>
<evidence type="ECO:0000269" key="2">
    <source>
    </source>
</evidence>
<evidence type="ECO:0000305" key="3"/>
<reference key="1">
    <citation type="journal article" date="1998" name="Curr. Genet.">
        <title>Isolation of a Trichoderma reesei cDNA encoding GTP: alpha-D-mannose-1-phosphate guanyltransferase involved in early steps of protein glycosylation.</title>
        <authorList>
            <person name="Kruszewska J.S."/>
            <person name="Saloheimo M."/>
            <person name="Penttila M."/>
            <person name="Palamarczyk G."/>
        </authorList>
    </citation>
    <scope>NUCLEOTIDE SEQUENCE [MRNA]</scope>
    <scope>CATALYTIC ACTIVITY</scope>
    <source>
        <strain>ATCC 56765 / Rut C-30</strain>
    </source>
</reference>